<accession>B3LSV8</accession>
<comment type="subcellular location">
    <subcellularLocation>
        <location evidence="1">Mitochondrion</location>
    </subcellularLocation>
</comment>
<comment type="similarity">
    <text evidence="3">Belongs to the AIM18/AIM46 family.</text>
</comment>
<protein>
    <recommendedName>
        <fullName>Altered inheritance of mitochondria protein 18, mitochondrial</fullName>
    </recommendedName>
</protein>
<dbReference type="EMBL" id="CH408053">
    <property type="protein sequence ID" value="EDV09239.1"/>
    <property type="molecule type" value="Genomic_DNA"/>
</dbReference>
<dbReference type="SMR" id="B3LSV8"/>
<dbReference type="HOGENOM" id="CLU_038840_0_0_1"/>
<dbReference type="OrthoDB" id="11535at4893"/>
<dbReference type="Proteomes" id="UP000008335">
    <property type="component" value="Unassembled WGS sequence"/>
</dbReference>
<dbReference type="GO" id="GO:0005739">
    <property type="term" value="C:mitochondrion"/>
    <property type="evidence" value="ECO:0007669"/>
    <property type="project" value="UniProtKB-SubCell"/>
</dbReference>
<dbReference type="GO" id="GO:0016872">
    <property type="term" value="F:intramolecular lyase activity"/>
    <property type="evidence" value="ECO:0007669"/>
    <property type="project" value="InterPro"/>
</dbReference>
<dbReference type="Gene3D" id="3.50.70.10">
    <property type="match status" value="1"/>
</dbReference>
<dbReference type="InterPro" id="IPR016087">
    <property type="entry name" value="Chalcone_isomerase"/>
</dbReference>
<dbReference type="InterPro" id="IPR016088">
    <property type="entry name" value="Chalcone_isomerase_3-sand"/>
</dbReference>
<dbReference type="InterPro" id="IPR036298">
    <property type="entry name" value="Chalcone_isomerase_sf"/>
</dbReference>
<dbReference type="PANTHER" id="PTHR47284">
    <property type="entry name" value="FATTY-ACID-BINDING PROTEIN 2"/>
    <property type="match status" value="1"/>
</dbReference>
<dbReference type="PANTHER" id="PTHR47284:SF3">
    <property type="entry name" value="FATTY-ACID-BINDING PROTEIN 2"/>
    <property type="match status" value="1"/>
</dbReference>
<dbReference type="Pfam" id="PF16035">
    <property type="entry name" value="Chalcone_2"/>
    <property type="match status" value="1"/>
</dbReference>
<dbReference type="SUPFAM" id="SSF54626">
    <property type="entry name" value="Chalcone isomerase"/>
    <property type="match status" value="1"/>
</dbReference>
<name>AIM18_YEAS1</name>
<proteinExistence type="inferred from homology"/>
<reference key="1">
    <citation type="submission" date="2005-03" db="EMBL/GenBank/DDBJ databases">
        <title>Annotation of the Saccharomyces cerevisiae RM11-1a genome.</title>
        <authorList>
            <consortium name="The Broad Institute Genome Sequencing Platform"/>
            <person name="Birren B.W."/>
            <person name="Lander E.S."/>
            <person name="Galagan J.E."/>
            <person name="Nusbaum C."/>
            <person name="Devon K."/>
            <person name="Cuomo C."/>
            <person name="Jaffe D.B."/>
            <person name="Butler J."/>
            <person name="Alvarez P."/>
            <person name="Gnerre S."/>
            <person name="Grabherr M."/>
            <person name="Kleber M."/>
            <person name="Mauceli E.W."/>
            <person name="Brockman W."/>
            <person name="MacCallum I.A."/>
            <person name="Rounsley S."/>
            <person name="Young S.K."/>
            <person name="LaButti K."/>
            <person name="Pushparaj V."/>
            <person name="DeCaprio D."/>
            <person name="Crawford M."/>
            <person name="Koehrsen M."/>
            <person name="Engels R."/>
            <person name="Montgomery P."/>
            <person name="Pearson M."/>
            <person name="Howarth C."/>
            <person name="Larson L."/>
            <person name="Luoma S."/>
            <person name="White J."/>
            <person name="O'Leary S."/>
            <person name="Kodira C.D."/>
            <person name="Zeng Q."/>
            <person name="Yandava C."/>
            <person name="Alvarado L."/>
            <person name="Pratt S."/>
            <person name="Kruglyak L."/>
        </authorList>
    </citation>
    <scope>NUCLEOTIDE SEQUENCE [LARGE SCALE GENOMIC DNA]</scope>
    <source>
        <strain>RM11-1a</strain>
    </source>
</reference>
<gene>
    <name type="primary">AIM18</name>
    <name type="synonym">FMP22</name>
    <name type="ORF">SCRG_04910</name>
</gene>
<feature type="transit peptide" description="Mitochondrion" evidence="2">
    <location>
        <begin position="1"/>
        <end position="72"/>
    </location>
</feature>
<feature type="chain" id="PRO_0000399555" description="Altered inheritance of mitochondria protein 18, mitochondrial">
    <location>
        <begin position="73"/>
        <end position="321"/>
    </location>
</feature>
<organism>
    <name type="scientific">Saccharomyces cerevisiae (strain RM11-1a)</name>
    <name type="common">Baker's yeast</name>
    <dbReference type="NCBI Taxonomy" id="285006"/>
    <lineage>
        <taxon>Eukaryota</taxon>
        <taxon>Fungi</taxon>
        <taxon>Dikarya</taxon>
        <taxon>Ascomycota</taxon>
        <taxon>Saccharomycotina</taxon>
        <taxon>Saccharomycetes</taxon>
        <taxon>Saccharomycetales</taxon>
        <taxon>Saccharomycetaceae</taxon>
        <taxon>Saccharomyces</taxon>
    </lineage>
</organism>
<evidence type="ECO:0000250" key="1"/>
<evidence type="ECO:0000255" key="2"/>
<evidence type="ECO:0000305" key="3"/>
<sequence>MDRGRCANMLKSLQRTLAKCQKSPSTNHWQCFKRNFTSIRATKYPGRSNSTFHYWPWFAASTLLATSLYYRDRPVQNDDKTDAFPSHTESIQVDSSVSDFPLTITALNFPVSTTFKLLGYGQRHVTFLRFKVYALGLYLAENDENLVSDTLNETYLHKYFLDVDDSKTPKENLARLLKRDDSKSVMMIDDLLDSGMRMLAKITPVRNTDFKHLKEGLVKTISKHPDVANNKDTLAKGLSELNDAFSRKGSVRKNDDLIIELLANGALQFSYHDSKNNEFEVMGVVNNQLVGKFLFSQYLCGEKSPSPQAKKTAIDKLITLL</sequence>
<keyword id="KW-0496">Mitochondrion</keyword>
<keyword id="KW-0809">Transit peptide</keyword>